<protein>
    <recommendedName>
        <fullName>Proteasome subunit beta type-7-B</fullName>
        <ecNumber>3.4.25.1</ecNumber>
    </recommendedName>
    <alternativeName>
        <fullName>20S proteasome beta subunit B-2</fullName>
    </alternativeName>
    <alternativeName>
        <fullName>Proteasome component FC</fullName>
    </alternativeName>
    <alternativeName>
        <fullName>Proteasome subunit beta type-2</fullName>
    </alternativeName>
</protein>
<dbReference type="EC" id="3.4.25.1"/>
<dbReference type="EMBL" id="AF043531">
    <property type="protein sequence ID" value="AAC32067.1"/>
    <property type="molecule type" value="mRNA"/>
</dbReference>
<dbReference type="EMBL" id="AB009052">
    <property type="protein sequence ID" value="BAB08528.1"/>
    <property type="molecule type" value="Genomic_DNA"/>
</dbReference>
<dbReference type="EMBL" id="CP002688">
    <property type="protein sequence ID" value="AED94567.1"/>
    <property type="molecule type" value="Genomic_DNA"/>
</dbReference>
<dbReference type="EMBL" id="CP002688">
    <property type="protein sequence ID" value="AED94568.1"/>
    <property type="molecule type" value="Genomic_DNA"/>
</dbReference>
<dbReference type="EMBL" id="AY093011">
    <property type="protein sequence ID" value="AAM13010.1"/>
    <property type="molecule type" value="mRNA"/>
</dbReference>
<dbReference type="EMBL" id="AY114591">
    <property type="protein sequence ID" value="AAM47910.1"/>
    <property type="molecule type" value="mRNA"/>
</dbReference>
<dbReference type="EMBL" id="AY087750">
    <property type="protein sequence ID" value="AAM65286.1"/>
    <property type="molecule type" value="mRNA"/>
</dbReference>
<dbReference type="EMBL" id="Y13177">
    <property type="protein sequence ID" value="CAA73620.1"/>
    <property type="molecule type" value="mRNA"/>
</dbReference>
<dbReference type="PIR" id="T51979">
    <property type="entry name" value="T51979"/>
</dbReference>
<dbReference type="RefSeq" id="NP_198874.1">
    <molecule id="Q7DLS1-1"/>
    <property type="nucleotide sequence ID" value="NM_123422.4"/>
</dbReference>
<dbReference type="RefSeq" id="NP_851108.1">
    <molecule id="Q7DLS1-1"/>
    <property type="nucleotide sequence ID" value="NM_180777.3"/>
</dbReference>
<dbReference type="SMR" id="Q7DLS1"/>
<dbReference type="BioGRID" id="19307">
    <property type="interactions" value="61"/>
</dbReference>
<dbReference type="FunCoup" id="Q7DLS1">
    <property type="interactions" value="4658"/>
</dbReference>
<dbReference type="IntAct" id="Q7DLS1">
    <property type="interactions" value="1"/>
</dbReference>
<dbReference type="STRING" id="3702.Q7DLS1"/>
<dbReference type="MEROPS" id="T01.011"/>
<dbReference type="iPTMnet" id="Q7DLS1"/>
<dbReference type="PaxDb" id="3702-AT5G40580.1"/>
<dbReference type="ProteomicsDB" id="225994">
    <molecule id="Q7DLS1-1"/>
</dbReference>
<dbReference type="EnsemblPlants" id="AT5G40580.1">
    <molecule id="Q7DLS1-1"/>
    <property type="protein sequence ID" value="AT5G40580.1"/>
    <property type="gene ID" value="AT5G40580"/>
</dbReference>
<dbReference type="EnsemblPlants" id="AT5G40580.2">
    <molecule id="Q7DLS1-1"/>
    <property type="protein sequence ID" value="AT5G40580.2"/>
    <property type="gene ID" value="AT5G40580"/>
</dbReference>
<dbReference type="GeneID" id="834056"/>
<dbReference type="Gramene" id="AT5G40580.1">
    <molecule id="Q7DLS1-1"/>
    <property type="protein sequence ID" value="AT5G40580.1"/>
    <property type="gene ID" value="AT5G40580"/>
</dbReference>
<dbReference type="Gramene" id="AT5G40580.2">
    <molecule id="Q7DLS1-1"/>
    <property type="protein sequence ID" value="AT5G40580.2"/>
    <property type="gene ID" value="AT5G40580"/>
</dbReference>
<dbReference type="KEGG" id="ath:AT5G40580"/>
<dbReference type="Araport" id="AT5G40580"/>
<dbReference type="TAIR" id="AT5G40580">
    <property type="gene designation" value="PBB2"/>
</dbReference>
<dbReference type="eggNOG" id="KOG0173">
    <property type="taxonomic scope" value="Eukaryota"/>
</dbReference>
<dbReference type="InParanoid" id="Q7DLS1"/>
<dbReference type="OMA" id="DHIYCCG"/>
<dbReference type="OrthoDB" id="429533at2759"/>
<dbReference type="PhylomeDB" id="Q7DLS1"/>
<dbReference type="PRO" id="PR:Q7DLS1"/>
<dbReference type="Proteomes" id="UP000006548">
    <property type="component" value="Chromosome 5"/>
</dbReference>
<dbReference type="ExpressionAtlas" id="Q7DLS1">
    <property type="expression patterns" value="baseline and differential"/>
</dbReference>
<dbReference type="GO" id="GO:0005634">
    <property type="term" value="C:nucleus"/>
    <property type="evidence" value="ECO:0007669"/>
    <property type="project" value="UniProtKB-SubCell"/>
</dbReference>
<dbReference type="GO" id="GO:0009536">
    <property type="term" value="C:plastid"/>
    <property type="evidence" value="ECO:0007005"/>
    <property type="project" value="TAIR"/>
</dbReference>
<dbReference type="GO" id="GO:0000502">
    <property type="term" value="C:proteasome complex"/>
    <property type="evidence" value="ECO:0000314"/>
    <property type="project" value="TAIR"/>
</dbReference>
<dbReference type="GO" id="GO:0019774">
    <property type="term" value="C:proteasome core complex, beta-subunit complex"/>
    <property type="evidence" value="ECO:0000250"/>
    <property type="project" value="UniProtKB"/>
</dbReference>
<dbReference type="GO" id="GO:0004298">
    <property type="term" value="F:threonine-type endopeptidase activity"/>
    <property type="evidence" value="ECO:0007669"/>
    <property type="project" value="UniProtKB-KW"/>
</dbReference>
<dbReference type="GO" id="GO:0051603">
    <property type="term" value="P:proteolysis involved in protein catabolic process"/>
    <property type="evidence" value="ECO:0007669"/>
    <property type="project" value="InterPro"/>
</dbReference>
<dbReference type="CDD" id="cd03763">
    <property type="entry name" value="proteasome_beta_type_7"/>
    <property type="match status" value="1"/>
</dbReference>
<dbReference type="FunFam" id="3.60.20.10:FF:000005">
    <property type="entry name" value="Proteasome subunit beta type-2"/>
    <property type="match status" value="1"/>
</dbReference>
<dbReference type="Gene3D" id="3.60.20.10">
    <property type="entry name" value="Glutamine Phosphoribosylpyrophosphate, subunit 1, domain 1"/>
    <property type="match status" value="1"/>
</dbReference>
<dbReference type="InterPro" id="IPR029055">
    <property type="entry name" value="Ntn_hydrolases_N"/>
</dbReference>
<dbReference type="InterPro" id="IPR000243">
    <property type="entry name" value="Pept_T1A_subB"/>
</dbReference>
<dbReference type="InterPro" id="IPR016050">
    <property type="entry name" value="Proteasome_bsu_CS"/>
</dbReference>
<dbReference type="InterPro" id="IPR001353">
    <property type="entry name" value="Proteasome_sua/b"/>
</dbReference>
<dbReference type="InterPro" id="IPR023333">
    <property type="entry name" value="Proteasome_suB-type"/>
</dbReference>
<dbReference type="PANTHER" id="PTHR32194">
    <property type="entry name" value="METALLOPROTEASE TLDD"/>
    <property type="match status" value="1"/>
</dbReference>
<dbReference type="PANTHER" id="PTHR32194:SF4">
    <property type="entry name" value="PROTEASOME SUBUNIT BETA TYPE-7"/>
    <property type="match status" value="1"/>
</dbReference>
<dbReference type="Pfam" id="PF00227">
    <property type="entry name" value="Proteasome"/>
    <property type="match status" value="1"/>
</dbReference>
<dbReference type="PRINTS" id="PR00141">
    <property type="entry name" value="PROTEASOME"/>
</dbReference>
<dbReference type="SUPFAM" id="SSF56235">
    <property type="entry name" value="N-terminal nucleophile aminohydrolases (Ntn hydrolases)"/>
    <property type="match status" value="1"/>
</dbReference>
<dbReference type="PROSITE" id="PS00854">
    <property type="entry name" value="PROTEASOME_BETA_1"/>
    <property type="match status" value="1"/>
</dbReference>
<dbReference type="PROSITE" id="PS51476">
    <property type="entry name" value="PROTEASOME_BETA_2"/>
    <property type="match status" value="1"/>
</dbReference>
<reference key="1">
    <citation type="journal article" date="1998" name="Genetics">
        <title>Molecular organization of the 20S proteasome gene family from Arabidopsis thaliana.</title>
        <authorList>
            <person name="Fu H."/>
            <person name="Doelling J.H."/>
            <person name="Arendt C.S."/>
            <person name="Hochstrasser M."/>
            <person name="Vierstra R.D."/>
        </authorList>
    </citation>
    <scope>NUCLEOTIDE SEQUENCE [MRNA]</scope>
    <scope>GENE FAMILY</scope>
    <scope>NOMENCLATURE</scope>
    <source>
        <strain>cv. Columbia</strain>
    </source>
</reference>
<reference key="2">
    <citation type="journal article" date="1998" name="DNA Res.">
        <title>Structural analysis of Arabidopsis thaliana chromosome 5. IV. Sequence features of the regions of 1,456,315 bp covered by nineteen physically assigned P1 and TAC clones.</title>
        <authorList>
            <person name="Sato S."/>
            <person name="Kaneko T."/>
            <person name="Kotani H."/>
            <person name="Nakamura Y."/>
            <person name="Asamizu E."/>
            <person name="Miyajima N."/>
            <person name="Tabata S."/>
        </authorList>
    </citation>
    <scope>NUCLEOTIDE SEQUENCE [LARGE SCALE GENOMIC DNA]</scope>
    <source>
        <strain>cv. Columbia</strain>
    </source>
</reference>
<reference key="3">
    <citation type="journal article" date="2017" name="Plant J.">
        <title>Araport11: a complete reannotation of the Arabidopsis thaliana reference genome.</title>
        <authorList>
            <person name="Cheng C.Y."/>
            <person name="Krishnakumar V."/>
            <person name="Chan A.P."/>
            <person name="Thibaud-Nissen F."/>
            <person name="Schobel S."/>
            <person name="Town C.D."/>
        </authorList>
    </citation>
    <scope>GENOME REANNOTATION</scope>
    <source>
        <strain>cv. Columbia</strain>
    </source>
</reference>
<reference key="4">
    <citation type="journal article" date="2003" name="Science">
        <title>Empirical analysis of transcriptional activity in the Arabidopsis genome.</title>
        <authorList>
            <person name="Yamada K."/>
            <person name="Lim J."/>
            <person name="Dale J.M."/>
            <person name="Chen H."/>
            <person name="Shinn P."/>
            <person name="Palm C.J."/>
            <person name="Southwick A.M."/>
            <person name="Wu H.C."/>
            <person name="Kim C.J."/>
            <person name="Nguyen M."/>
            <person name="Pham P.K."/>
            <person name="Cheuk R.F."/>
            <person name="Karlin-Newmann G."/>
            <person name="Liu S.X."/>
            <person name="Lam B."/>
            <person name="Sakano H."/>
            <person name="Wu T."/>
            <person name="Yu G."/>
            <person name="Miranda M."/>
            <person name="Quach H.L."/>
            <person name="Tripp M."/>
            <person name="Chang C.H."/>
            <person name="Lee J.M."/>
            <person name="Toriumi M.J."/>
            <person name="Chan M.M."/>
            <person name="Tang C.C."/>
            <person name="Onodera C.S."/>
            <person name="Deng J.M."/>
            <person name="Akiyama K."/>
            <person name="Ansari Y."/>
            <person name="Arakawa T."/>
            <person name="Banh J."/>
            <person name="Banno F."/>
            <person name="Bowser L."/>
            <person name="Brooks S.Y."/>
            <person name="Carninci P."/>
            <person name="Chao Q."/>
            <person name="Choy N."/>
            <person name="Enju A."/>
            <person name="Goldsmith A.D."/>
            <person name="Gurjal M."/>
            <person name="Hansen N.F."/>
            <person name="Hayashizaki Y."/>
            <person name="Johnson-Hopson C."/>
            <person name="Hsuan V.W."/>
            <person name="Iida K."/>
            <person name="Karnes M."/>
            <person name="Khan S."/>
            <person name="Koesema E."/>
            <person name="Ishida J."/>
            <person name="Jiang P.X."/>
            <person name="Jones T."/>
            <person name="Kawai J."/>
            <person name="Kamiya A."/>
            <person name="Meyers C."/>
            <person name="Nakajima M."/>
            <person name="Narusaka M."/>
            <person name="Seki M."/>
            <person name="Sakurai T."/>
            <person name="Satou M."/>
            <person name="Tamse R."/>
            <person name="Vaysberg M."/>
            <person name="Wallender E.K."/>
            <person name="Wong C."/>
            <person name="Yamamura Y."/>
            <person name="Yuan S."/>
            <person name="Shinozaki K."/>
            <person name="Davis R.W."/>
            <person name="Theologis A."/>
            <person name="Ecker J.R."/>
        </authorList>
    </citation>
    <scope>NUCLEOTIDE SEQUENCE [LARGE SCALE MRNA]</scope>
    <source>
        <strain>cv. Columbia</strain>
    </source>
</reference>
<reference key="5">
    <citation type="submission" date="2002-03" db="EMBL/GenBank/DDBJ databases">
        <title>Full-length cDNA from Arabidopsis thaliana.</title>
        <authorList>
            <person name="Brover V.V."/>
            <person name="Troukhan M.E."/>
            <person name="Alexandrov N.A."/>
            <person name="Lu Y.-P."/>
            <person name="Flavell R.B."/>
            <person name="Feldmann K.A."/>
        </authorList>
    </citation>
    <scope>NUCLEOTIDE SEQUENCE [LARGE SCALE MRNA]</scope>
</reference>
<reference key="6">
    <citation type="journal article" date="1997" name="FEBS Lett.">
        <title>The 20S proteasome gene family in Arabidopsis thaliana.</title>
        <authorList>
            <person name="Parmentier Y."/>
            <person name="Bouchez D."/>
            <person name="Fleck J."/>
            <person name="Genschik P."/>
        </authorList>
    </citation>
    <scope>NUCLEOTIDE SEQUENCE [MRNA] OF 57-274</scope>
    <source>
        <strain>cv. Columbia</strain>
    </source>
</reference>
<reference key="7">
    <citation type="journal article" date="1999" name="Mol. Biol. Rep.">
        <title>Structure and functional analyses of the 26S proteasome subunits from plants.</title>
        <authorList>
            <person name="Fu H."/>
            <person name="Girod P.-A."/>
            <person name="Doelling J.H."/>
            <person name="van Nocker S."/>
            <person name="Hochstrasser M."/>
            <person name="Finley D."/>
            <person name="Vierstra R.D."/>
        </authorList>
    </citation>
    <scope>SUBUNIT</scope>
</reference>
<reference key="8">
    <citation type="journal article" date="2010" name="J. Biol. Chem.">
        <title>Affinity purification of the Arabidopsis 26 S proteasome reveals a diverse array of plant proteolytic complexes.</title>
        <authorList>
            <person name="Book A.J."/>
            <person name="Gladman N.P."/>
            <person name="Lee S.S."/>
            <person name="Scalf M."/>
            <person name="Smith L.M."/>
            <person name="Vierstra R.D."/>
        </authorList>
    </citation>
    <scope>IDENTIFICATION BY MASS SPECTROMETRY</scope>
    <scope>CHARACTERIZATION OF THE 26S PROTEASOME COMPLEX</scope>
    <scope>SUBUNIT</scope>
</reference>
<comment type="function">
    <text>The proteasome is a multicatalytic proteinase complex which is characterized by its ability to cleave peptides with Arg, Phe, Tyr, Leu, and Glu adjacent to the leaving group at neutral or slightly basic pH. The proteasome has an ATP-dependent proteolytic activity.</text>
</comment>
<comment type="catalytic activity">
    <reaction>
        <text>Cleavage of peptide bonds with very broad specificity.</text>
        <dbReference type="EC" id="3.4.25.1"/>
    </reaction>
</comment>
<comment type="subunit">
    <text evidence="4 5">Component of the 20S core complex of the 26S proteasome. The 26S proteasome is composed of a core protease (CP), known as the 20S proteasome, capped at one or both ends by the 19S regulatory particle (RP/PA700). The 20S proteasome core is composed of 28 subunits that are arranged in four stacked rings, resulting in a barrel-shaped structure. The two end rings are each formed by seven alpha subunits, and the two central rings are each formed by seven beta subunits. The catalytic chamber with the active sites is on the inside of the barrel.</text>
</comment>
<comment type="subcellular location">
    <subcellularLocation>
        <location evidence="3">Cytoplasm</location>
    </subcellularLocation>
    <subcellularLocation>
        <location evidence="1">Nucleus</location>
    </subcellularLocation>
</comment>
<comment type="alternative products">
    <event type="alternative splicing"/>
    <isoform>
        <id>Q7DLS1-1</id>
        <name>1</name>
        <sequence type="displayed"/>
    </isoform>
    <text>A number of isoforms are produced. According to EST sequences.</text>
</comment>
<comment type="similarity">
    <text evidence="3">Belongs to the peptidase T1B family.</text>
</comment>
<keyword id="KW-0025">Alternative splicing</keyword>
<keyword id="KW-0963">Cytoplasm</keyword>
<keyword id="KW-0378">Hydrolase</keyword>
<keyword id="KW-0539">Nucleus</keyword>
<keyword id="KW-0645">Protease</keyword>
<keyword id="KW-0647">Proteasome</keyword>
<keyword id="KW-1185">Reference proteome</keyword>
<keyword id="KW-0888">Threonine protease</keyword>
<keyword id="KW-0865">Zymogen</keyword>
<accession>Q7DLS1</accession>
<accession>O23709</accession>
<accession>Q8LAK8</accession>
<accession>Q8RWL9</accession>
<feature type="propeptide" id="PRO_0000042832" description="Removed in mature form">
    <location>
        <begin position="1"/>
        <end position="37"/>
    </location>
</feature>
<feature type="chain" id="PRO_0000042833" description="Proteasome subunit beta type-7-B">
    <location>
        <begin position="38"/>
        <end position="274"/>
    </location>
</feature>
<feature type="active site" description="Nucleophile" evidence="2">
    <location>
        <position position="40"/>
    </location>
</feature>
<feature type="sequence conflict" description="In Ref. 4; AAM13010/AAM47910." evidence="6" ref="4">
    <original>A</original>
    <variation>V</variation>
    <location>
        <position position="173"/>
    </location>
</feature>
<proteinExistence type="evidence at protein level"/>
<name>PSB7B_ARATH</name>
<organism>
    <name type="scientific">Arabidopsis thaliana</name>
    <name type="common">Mouse-ear cress</name>
    <dbReference type="NCBI Taxonomy" id="3702"/>
    <lineage>
        <taxon>Eukaryota</taxon>
        <taxon>Viridiplantae</taxon>
        <taxon>Streptophyta</taxon>
        <taxon>Embryophyta</taxon>
        <taxon>Tracheophyta</taxon>
        <taxon>Spermatophyta</taxon>
        <taxon>Magnoliopsida</taxon>
        <taxon>eudicotyledons</taxon>
        <taxon>Gunneridae</taxon>
        <taxon>Pentapetalae</taxon>
        <taxon>rosids</taxon>
        <taxon>malvids</taxon>
        <taxon>Brassicales</taxon>
        <taxon>Brassicaceae</taxon>
        <taxon>Camelineae</taxon>
        <taxon>Arabidopsis</taxon>
    </lineage>
</organism>
<evidence type="ECO:0000250" key="1"/>
<evidence type="ECO:0000250" key="2">
    <source>
        <dbReference type="UniProtKB" id="P25043"/>
    </source>
</evidence>
<evidence type="ECO:0000255" key="3">
    <source>
        <dbReference type="PROSITE-ProRule" id="PRU00809"/>
    </source>
</evidence>
<evidence type="ECO:0000269" key="4">
    <source>
    </source>
</evidence>
<evidence type="ECO:0000269" key="5">
    <source>
    </source>
</evidence>
<evidence type="ECO:0000305" key="6"/>
<gene>
    <name type="primary">PBB2</name>
    <name type="synonym">PRCFC</name>
    <name type="ordered locus">At5g40580</name>
    <name type="ORF">MNF13.10</name>
</gene>
<sequence length="274" mass="29617">MSQSSVDIPPKGGFSFDLCKRNDMLTQKGLKAPSFLKTGTTIVGLIFKDGVILGADTRATEGPIVADKNCEKIHYMAPNIYCCGAGTAADTEAVTDMVSSQLRLHRYQTGRDSRVVTALTLLKKHLFSYQGHVSAALVLGGVDITGPHLHTIYPHGSTDTLPFATMGSGSLAAMSVFEAKYKEGLTRDEGIKLVAEAICSGIFNDLGSGSNVDICVITKGHKEYLRNYMEPNPRTYVSSKGYSFTKKTEVLLTKITPLLERVEIVEVAGEAMEE</sequence>